<gene>
    <name evidence="1" type="primary">smpB</name>
    <name type="ordered locus">CHAB381_1111</name>
</gene>
<sequence length="153" mass="17479">MKELTKNKKAWHNFTIIENFEAGIVLKGSEVKALRMGRANLKDSFCRIIKGELFLLNAHISFLENTNAFFRPSENGARKLLMHKKEINRLFGAVSKEGMAIVALSLYLNDKNKVKARIALAKGKNLHDKREALKRKEAEREAQSAMKRYAKGY</sequence>
<feature type="chain" id="PRO_1000002024" description="SsrA-binding protein">
    <location>
        <begin position="1"/>
        <end position="153"/>
    </location>
</feature>
<feature type="region of interest" description="Disordered" evidence="2">
    <location>
        <begin position="132"/>
        <end position="153"/>
    </location>
</feature>
<feature type="compositionally biased region" description="Basic and acidic residues" evidence="2">
    <location>
        <begin position="132"/>
        <end position="142"/>
    </location>
</feature>
<evidence type="ECO:0000255" key="1">
    <source>
        <dbReference type="HAMAP-Rule" id="MF_00023"/>
    </source>
</evidence>
<evidence type="ECO:0000256" key="2">
    <source>
        <dbReference type="SAM" id="MobiDB-lite"/>
    </source>
</evidence>
<keyword id="KW-0963">Cytoplasm</keyword>
<keyword id="KW-1185">Reference proteome</keyword>
<keyword id="KW-0694">RNA-binding</keyword>
<accession>A7I2C6</accession>
<dbReference type="EMBL" id="CP000776">
    <property type="protein sequence ID" value="ABS52192.1"/>
    <property type="molecule type" value="Genomic_DNA"/>
</dbReference>
<dbReference type="RefSeq" id="WP_012108966.1">
    <property type="nucleotide sequence ID" value="NC_009714.1"/>
</dbReference>
<dbReference type="SMR" id="A7I2C6"/>
<dbReference type="STRING" id="360107.CHAB381_1111"/>
<dbReference type="KEGG" id="cha:CHAB381_1111"/>
<dbReference type="eggNOG" id="COG0691">
    <property type="taxonomic scope" value="Bacteria"/>
</dbReference>
<dbReference type="HOGENOM" id="CLU_108953_3_1_7"/>
<dbReference type="OrthoDB" id="9805462at2"/>
<dbReference type="Proteomes" id="UP000002407">
    <property type="component" value="Chromosome"/>
</dbReference>
<dbReference type="GO" id="GO:0005829">
    <property type="term" value="C:cytosol"/>
    <property type="evidence" value="ECO:0007669"/>
    <property type="project" value="TreeGrafter"/>
</dbReference>
<dbReference type="GO" id="GO:0003723">
    <property type="term" value="F:RNA binding"/>
    <property type="evidence" value="ECO:0007669"/>
    <property type="project" value="UniProtKB-UniRule"/>
</dbReference>
<dbReference type="GO" id="GO:0070929">
    <property type="term" value="P:trans-translation"/>
    <property type="evidence" value="ECO:0007669"/>
    <property type="project" value="UniProtKB-UniRule"/>
</dbReference>
<dbReference type="CDD" id="cd09294">
    <property type="entry name" value="SmpB"/>
    <property type="match status" value="1"/>
</dbReference>
<dbReference type="Gene3D" id="2.40.280.10">
    <property type="match status" value="1"/>
</dbReference>
<dbReference type="HAMAP" id="MF_00023">
    <property type="entry name" value="SmpB"/>
    <property type="match status" value="1"/>
</dbReference>
<dbReference type="InterPro" id="IPR023620">
    <property type="entry name" value="SmpB"/>
</dbReference>
<dbReference type="InterPro" id="IPR000037">
    <property type="entry name" value="SsrA-bd_prot"/>
</dbReference>
<dbReference type="InterPro" id="IPR020081">
    <property type="entry name" value="SsrA-bd_prot_CS"/>
</dbReference>
<dbReference type="NCBIfam" id="NF003843">
    <property type="entry name" value="PRK05422.1"/>
    <property type="match status" value="1"/>
</dbReference>
<dbReference type="NCBIfam" id="TIGR00086">
    <property type="entry name" value="smpB"/>
    <property type="match status" value="1"/>
</dbReference>
<dbReference type="PANTHER" id="PTHR30308:SF2">
    <property type="entry name" value="SSRA-BINDING PROTEIN"/>
    <property type="match status" value="1"/>
</dbReference>
<dbReference type="PANTHER" id="PTHR30308">
    <property type="entry name" value="TMRNA-BINDING COMPONENT OF TRANS-TRANSLATION TAGGING COMPLEX"/>
    <property type="match status" value="1"/>
</dbReference>
<dbReference type="Pfam" id="PF01668">
    <property type="entry name" value="SmpB"/>
    <property type="match status" value="1"/>
</dbReference>
<dbReference type="SUPFAM" id="SSF74982">
    <property type="entry name" value="Small protein B (SmpB)"/>
    <property type="match status" value="1"/>
</dbReference>
<dbReference type="PROSITE" id="PS01317">
    <property type="entry name" value="SSRP"/>
    <property type="match status" value="1"/>
</dbReference>
<protein>
    <recommendedName>
        <fullName evidence="1">SsrA-binding protein</fullName>
    </recommendedName>
    <alternativeName>
        <fullName evidence="1">Small protein B</fullName>
    </alternativeName>
</protein>
<organism>
    <name type="scientific">Campylobacter hominis (strain ATCC BAA-381 / DSM 21671 / CCUG 45161 / LMG 19568 / NCTC 13146 / CH001A)</name>
    <dbReference type="NCBI Taxonomy" id="360107"/>
    <lineage>
        <taxon>Bacteria</taxon>
        <taxon>Pseudomonadati</taxon>
        <taxon>Campylobacterota</taxon>
        <taxon>Epsilonproteobacteria</taxon>
        <taxon>Campylobacterales</taxon>
        <taxon>Campylobacteraceae</taxon>
        <taxon>Campylobacter</taxon>
    </lineage>
</organism>
<comment type="function">
    <text evidence="1">Required for rescue of stalled ribosomes mediated by trans-translation. Binds to transfer-messenger RNA (tmRNA), required for stable association of tmRNA with ribosomes. tmRNA and SmpB together mimic tRNA shape, replacing the anticodon stem-loop with SmpB. tmRNA is encoded by the ssrA gene; the 2 termini fold to resemble tRNA(Ala) and it encodes a 'tag peptide', a short internal open reading frame. During trans-translation Ala-aminoacylated tmRNA acts like a tRNA, entering the A-site of stalled ribosomes, displacing the stalled mRNA. The ribosome then switches to translate the ORF on the tmRNA; the nascent peptide is terminated with the 'tag peptide' encoded by the tmRNA and targeted for degradation. The ribosome is freed to recommence translation, which seems to be the essential function of trans-translation.</text>
</comment>
<comment type="subcellular location">
    <subcellularLocation>
        <location evidence="1">Cytoplasm</location>
    </subcellularLocation>
    <text evidence="1">The tmRNA-SmpB complex associates with stalled 70S ribosomes.</text>
</comment>
<comment type="similarity">
    <text evidence="1">Belongs to the SmpB family.</text>
</comment>
<reference key="1">
    <citation type="submission" date="2007-07" db="EMBL/GenBank/DDBJ databases">
        <title>Complete genome sequence of Campylobacter hominis ATCC BAA-381, a commensal isolated from the human gastrointestinal tract.</title>
        <authorList>
            <person name="Fouts D.E."/>
            <person name="Mongodin E.F."/>
            <person name="Puiu D."/>
            <person name="Sebastian Y."/>
            <person name="Miller W.G."/>
            <person name="Mandrell R.E."/>
            <person name="Nelson K.E."/>
        </authorList>
    </citation>
    <scope>NUCLEOTIDE SEQUENCE [LARGE SCALE GENOMIC DNA]</scope>
    <source>
        <strain>ATCC BAA-381 / DSM 21671 / CCUG 45161 / LMG 19568 / NCTC 13146 / CH001A</strain>
    </source>
</reference>
<proteinExistence type="inferred from homology"/>
<name>SSRP_CAMHC</name>